<feature type="chain" id="PRO_0000340665" description="Putative rhophilin-2-like protein RHPN2P1">
    <location>
        <begin position="1"/>
        <end position="583"/>
    </location>
</feature>
<feature type="domain" description="BRO1" evidence="1">
    <location>
        <begin position="26"/>
        <end position="375"/>
    </location>
</feature>
<feature type="domain" description="PDZ">
    <location>
        <begin position="412"/>
        <end position="490"/>
    </location>
</feature>
<reference key="1">
    <citation type="journal article" date="2006" name="Nature">
        <title>Analysis of the DNA sequence and duplication history of human chromosome 15.</title>
        <authorList>
            <person name="Zody M.C."/>
            <person name="Garber M."/>
            <person name="Sharpe T."/>
            <person name="Young S.K."/>
            <person name="Rowen L."/>
            <person name="O'Neill K."/>
            <person name="Whittaker C.A."/>
            <person name="Kamal M."/>
            <person name="Chang J.L."/>
            <person name="Cuomo C.A."/>
            <person name="Dewar K."/>
            <person name="FitzGerald M.G."/>
            <person name="Kodira C.D."/>
            <person name="Madan A."/>
            <person name="Qin S."/>
            <person name="Yang X."/>
            <person name="Abbasi N."/>
            <person name="Abouelleil A."/>
            <person name="Arachchi H.M."/>
            <person name="Baradarani L."/>
            <person name="Birditt B."/>
            <person name="Bloom S."/>
            <person name="Bloom T."/>
            <person name="Borowsky M.L."/>
            <person name="Burke J."/>
            <person name="Butler J."/>
            <person name="Cook A."/>
            <person name="DeArellano K."/>
            <person name="DeCaprio D."/>
            <person name="Dorris L. III"/>
            <person name="Dors M."/>
            <person name="Eichler E.E."/>
            <person name="Engels R."/>
            <person name="Fahey J."/>
            <person name="Fleetwood P."/>
            <person name="Friedman C."/>
            <person name="Gearin G."/>
            <person name="Hall J.L."/>
            <person name="Hensley G."/>
            <person name="Johnson E."/>
            <person name="Jones C."/>
            <person name="Kamat A."/>
            <person name="Kaur A."/>
            <person name="Locke D.P."/>
            <person name="Madan A."/>
            <person name="Munson G."/>
            <person name="Jaffe D.B."/>
            <person name="Lui A."/>
            <person name="Macdonald P."/>
            <person name="Mauceli E."/>
            <person name="Naylor J.W."/>
            <person name="Nesbitt R."/>
            <person name="Nicol R."/>
            <person name="O'Leary S.B."/>
            <person name="Ratcliffe A."/>
            <person name="Rounsley S."/>
            <person name="She X."/>
            <person name="Sneddon K.M.B."/>
            <person name="Stewart S."/>
            <person name="Sougnez C."/>
            <person name="Stone S.M."/>
            <person name="Topham K."/>
            <person name="Vincent D."/>
            <person name="Wang S."/>
            <person name="Zimmer A.R."/>
            <person name="Birren B.W."/>
            <person name="Hood L."/>
            <person name="Lander E.S."/>
            <person name="Nusbaum C."/>
        </authorList>
    </citation>
    <scope>NUCLEOTIDE SEQUENCE [LARGE SCALE GENOMIC DNA]</scope>
</reference>
<organism>
    <name type="scientific">Homo sapiens</name>
    <name type="common">Human</name>
    <dbReference type="NCBI Taxonomy" id="9606"/>
    <lineage>
        <taxon>Eukaryota</taxon>
        <taxon>Metazoa</taxon>
        <taxon>Chordata</taxon>
        <taxon>Craniata</taxon>
        <taxon>Vertebrata</taxon>
        <taxon>Euteleostomi</taxon>
        <taxon>Mammalia</taxon>
        <taxon>Eutheria</taxon>
        <taxon>Euarchontoglires</taxon>
        <taxon>Primates</taxon>
        <taxon>Haplorrhini</taxon>
        <taxon>Catarrhini</taxon>
        <taxon>Hominidae</taxon>
        <taxon>Homo</taxon>
    </lineage>
</organism>
<keyword id="KW-1267">Proteomics identification</keyword>
<keyword id="KW-1185">Reference proteome</keyword>
<sequence>MLKEELEGLNISVGIYQNTEEAFTVPLIPLGLKETKDIDFSVILKDFILEHYSEDGYLYEDEITDLMDPRQACRTPSRDEARVELLMTYFIQLGFAWIRFKKYNTSPRIFFYRYDSLNGVLVSQQNLLLEKASVLFNTGALYTQIGTWRYWQMQAGLQSAIDAFQRAAGVLNYLKETFTHTPSYDMSPAMLSVLVKMMLTQAQESVFEKISLPGIRNEFFMLVKVAQEAAKVGEVYQQLHAAMSQALVKENIPYSWASLACVKAHHYTALAHYFTAILLIDHQVKPGMDLDHQEKCLSQLYDHMPEGLTPLATLKNDQQRRQLGKSHLHRAMAHHEESVREASLCKKLRSIEVLQKVLCAAQERSRLTYAQHQEDDDLLNLIHAPSVVAKTEQEPKGPLSVFLANKQWMPPRSNRFTAEEGDLGFTLRGNAPVEVHFLDPYCSALVAGARGGDYIVSIQLVDCKWLTVSEVMKLLKSFGEDEIEMKVVSLLDSTSSMHNKSATYSVGMQKTYSMICLAIDDDNKTDKTQKISKKLSFLSWGTNKNRQKSASTLCLPSVGAARPQVKKKLPSPFSLLNSDSSSY</sequence>
<dbReference type="EMBL" id="AC126603">
    <property type="status" value="NOT_ANNOTATED_CDS"/>
    <property type="molecule type" value="Genomic_DNA"/>
</dbReference>
<dbReference type="SMR" id="A8MT19"/>
<dbReference type="FunCoup" id="A8MT19">
    <property type="interactions" value="2"/>
</dbReference>
<dbReference type="BioMuta" id="HGNC:37708"/>
<dbReference type="jPOST" id="A8MT19"/>
<dbReference type="MassIVE" id="A8MT19"/>
<dbReference type="AGR" id="HGNC:37708"/>
<dbReference type="GeneCards" id="RHPN2P1"/>
<dbReference type="HGNC" id="HGNC:37708">
    <property type="gene designation" value="RHPN2P1"/>
</dbReference>
<dbReference type="neXtProt" id="NX_A8MT19"/>
<dbReference type="InParanoid" id="A8MT19"/>
<dbReference type="PAN-GO" id="A8MT19">
    <property type="GO annotations" value="1 GO annotation based on evolutionary models"/>
</dbReference>
<dbReference type="PhylomeDB" id="A8MT19"/>
<dbReference type="SignaLink" id="A8MT19"/>
<dbReference type="ChiTaRS" id="RHPN2P1">
    <property type="organism name" value="human"/>
</dbReference>
<dbReference type="Pharos" id="A8MT19">
    <property type="development level" value="Tdark"/>
</dbReference>
<dbReference type="Proteomes" id="UP000005640">
    <property type="component" value="Unplaced"/>
</dbReference>
<dbReference type="RNAct" id="A8MT19">
    <property type="molecule type" value="protein"/>
</dbReference>
<dbReference type="GO" id="GO:0051497">
    <property type="term" value="P:negative regulation of stress fiber assembly"/>
    <property type="evidence" value="ECO:0000318"/>
    <property type="project" value="GO_Central"/>
</dbReference>
<dbReference type="CDD" id="cd06712">
    <property type="entry name" value="PDZ_rhophilin-like"/>
    <property type="match status" value="1"/>
</dbReference>
<dbReference type="FunFam" id="1.25.40.280:FF:000003">
    <property type="entry name" value="RHPN1 isoform 1"/>
    <property type="match status" value="1"/>
</dbReference>
<dbReference type="FunFam" id="2.30.42.10:FF:000160">
    <property type="entry name" value="RHPN1 isoform 1"/>
    <property type="match status" value="1"/>
</dbReference>
<dbReference type="Gene3D" id="2.30.42.10">
    <property type="match status" value="1"/>
</dbReference>
<dbReference type="Gene3D" id="1.25.40.280">
    <property type="entry name" value="alix/aip1 like domains"/>
    <property type="match status" value="1"/>
</dbReference>
<dbReference type="InterPro" id="IPR004328">
    <property type="entry name" value="BRO1_dom"/>
</dbReference>
<dbReference type="InterPro" id="IPR038499">
    <property type="entry name" value="BRO1_sf"/>
</dbReference>
<dbReference type="InterPro" id="IPR001478">
    <property type="entry name" value="PDZ"/>
</dbReference>
<dbReference type="InterPro" id="IPR036034">
    <property type="entry name" value="PDZ_sf"/>
</dbReference>
<dbReference type="InterPro" id="IPR047138">
    <property type="entry name" value="RHPN1_2"/>
</dbReference>
<dbReference type="PANTHER" id="PTHR23031">
    <property type="entry name" value="RHOPHILIN"/>
    <property type="match status" value="1"/>
</dbReference>
<dbReference type="PANTHER" id="PTHR23031:SF5">
    <property type="entry name" value="RHOPHILIN-2-RELATED"/>
    <property type="match status" value="1"/>
</dbReference>
<dbReference type="Pfam" id="PF03097">
    <property type="entry name" value="BRO1"/>
    <property type="match status" value="1"/>
</dbReference>
<dbReference type="SMART" id="SM01041">
    <property type="entry name" value="BRO1"/>
    <property type="match status" value="1"/>
</dbReference>
<dbReference type="SMART" id="SM00228">
    <property type="entry name" value="PDZ"/>
    <property type="match status" value="1"/>
</dbReference>
<dbReference type="SUPFAM" id="SSF50156">
    <property type="entry name" value="PDZ domain-like"/>
    <property type="match status" value="1"/>
</dbReference>
<dbReference type="PROSITE" id="PS51180">
    <property type="entry name" value="BRO1"/>
    <property type="match status" value="1"/>
</dbReference>
<protein>
    <recommendedName>
        <fullName>Putative rhophilin-2-like protein RHPN2P1</fullName>
    </recommendedName>
    <alternativeName>
        <fullName>Rhophilin-2 pseudogene 1</fullName>
    </alternativeName>
</protein>
<name>RHN2P_HUMAN</name>
<gene>
    <name type="primary">RHPN2P1</name>
</gene>
<evidence type="ECO:0000255" key="1">
    <source>
        <dbReference type="PROSITE-ProRule" id="PRU00526"/>
    </source>
</evidence>
<evidence type="ECO:0000305" key="2"/>
<comment type="caution">
    <text evidence="2">Could be the product of a pseudogene.</text>
</comment>
<accession>A8MT19</accession>
<proteinExistence type="uncertain"/>